<keyword id="KW-0028">Amino-acid biosynthesis</keyword>
<keyword id="KW-0378">Hydrolase</keyword>
<keyword id="KW-0486">Methionine biosynthesis</keyword>
<keyword id="KW-1185">Reference proteome</keyword>
<organism>
    <name type="scientific">Shewanella pealeana (strain ATCC 700345 / ANG-SQ1)</name>
    <dbReference type="NCBI Taxonomy" id="398579"/>
    <lineage>
        <taxon>Bacteria</taxon>
        <taxon>Pseudomonadati</taxon>
        <taxon>Pseudomonadota</taxon>
        <taxon>Gammaproteobacteria</taxon>
        <taxon>Alteromonadales</taxon>
        <taxon>Shewanellaceae</taxon>
        <taxon>Shewanella</taxon>
    </lineage>
</organism>
<feature type="chain" id="PRO_0000359348" description="5'-methylthioadenosine/S-adenosylhomocysteine nucleosidase">
    <location>
        <begin position="1"/>
        <end position="230"/>
    </location>
</feature>
<feature type="active site" description="Proton acceptor" evidence="1">
    <location>
        <position position="12"/>
    </location>
</feature>
<feature type="active site" description="Proton donor" evidence="1">
    <location>
        <position position="198"/>
    </location>
</feature>
<feature type="binding site" evidence="1">
    <location>
        <position position="78"/>
    </location>
    <ligand>
        <name>substrate</name>
    </ligand>
</feature>
<feature type="binding site" evidence="1">
    <location>
        <position position="153"/>
    </location>
    <ligand>
        <name>substrate</name>
    </ligand>
</feature>
<feature type="binding site" evidence="1">
    <location>
        <begin position="174"/>
        <end position="175"/>
    </location>
    <ligand>
        <name>substrate</name>
    </ligand>
</feature>
<protein>
    <recommendedName>
        <fullName evidence="1">5'-methylthioadenosine/S-adenosylhomocysteine nucleosidase</fullName>
        <shortName evidence="1">MTA/SAH nucleosidase</shortName>
        <shortName evidence="1">MTAN</shortName>
        <ecNumber evidence="1">3.2.2.9</ecNumber>
    </recommendedName>
    <alternativeName>
        <fullName evidence="1">5'-deoxyadenosine nucleosidase</fullName>
        <shortName evidence="1">DOA nucleosidase</shortName>
        <shortName evidence="1">dAdo nucleosidase</shortName>
    </alternativeName>
    <alternativeName>
        <fullName evidence="1">5'-methylthioadenosine nucleosidase</fullName>
        <shortName evidence="1">MTA nucleosidase</shortName>
    </alternativeName>
    <alternativeName>
        <fullName evidence="1">S-adenosylhomocysteine nucleosidase</fullName>
        <shortName evidence="1">AdoHcy nucleosidase</shortName>
        <shortName evidence="1">SAH nucleosidase</shortName>
        <shortName evidence="1">SRH nucleosidase</shortName>
    </alternativeName>
</protein>
<evidence type="ECO:0000255" key="1">
    <source>
        <dbReference type="HAMAP-Rule" id="MF_01684"/>
    </source>
</evidence>
<proteinExistence type="inferred from homology"/>
<reference key="1">
    <citation type="submission" date="2007-10" db="EMBL/GenBank/DDBJ databases">
        <title>Complete sequence of Shewanella pealeana ATCC 700345.</title>
        <authorList>
            <consortium name="US DOE Joint Genome Institute"/>
            <person name="Copeland A."/>
            <person name="Lucas S."/>
            <person name="Lapidus A."/>
            <person name="Barry K."/>
            <person name="Glavina del Rio T."/>
            <person name="Dalin E."/>
            <person name="Tice H."/>
            <person name="Pitluck S."/>
            <person name="Chertkov O."/>
            <person name="Brettin T."/>
            <person name="Bruce D."/>
            <person name="Detter J.C."/>
            <person name="Han C."/>
            <person name="Schmutz J."/>
            <person name="Larimer F."/>
            <person name="Land M."/>
            <person name="Hauser L."/>
            <person name="Kyrpides N."/>
            <person name="Kim E."/>
            <person name="Zhao J.-S.Z."/>
            <person name="Manno D."/>
            <person name="Hawari J."/>
            <person name="Richardson P."/>
        </authorList>
    </citation>
    <scope>NUCLEOTIDE SEQUENCE [LARGE SCALE GENOMIC DNA]</scope>
    <source>
        <strain>ATCC 700345 / ANG-SQ1</strain>
    </source>
</reference>
<gene>
    <name evidence="1" type="primary">mtnN</name>
    <name type="ordered locus">Spea_1001</name>
</gene>
<name>MTNN_SHEPA</name>
<comment type="function">
    <text evidence="1">Catalyzes the irreversible cleavage of the glycosidic bond in both 5'-methylthioadenosine (MTA) and S-adenosylhomocysteine (SAH/AdoHcy) to adenine and the corresponding thioribose, 5'-methylthioribose and S-ribosylhomocysteine, respectively. Also cleaves 5'-deoxyadenosine, a toxic by-product of radical S-adenosylmethionine (SAM) enzymes, into 5-deoxyribose and adenine.</text>
</comment>
<comment type="catalytic activity">
    <reaction evidence="1">
        <text>S-adenosyl-L-homocysteine + H2O = S-(5-deoxy-D-ribos-5-yl)-L-homocysteine + adenine</text>
        <dbReference type="Rhea" id="RHEA:17805"/>
        <dbReference type="ChEBI" id="CHEBI:15377"/>
        <dbReference type="ChEBI" id="CHEBI:16708"/>
        <dbReference type="ChEBI" id="CHEBI:57856"/>
        <dbReference type="ChEBI" id="CHEBI:58195"/>
        <dbReference type="EC" id="3.2.2.9"/>
    </reaction>
</comment>
<comment type="catalytic activity">
    <reaction evidence="1">
        <text>S-methyl-5'-thioadenosine + H2O = 5-(methylsulfanyl)-D-ribose + adenine</text>
        <dbReference type="Rhea" id="RHEA:13617"/>
        <dbReference type="ChEBI" id="CHEBI:15377"/>
        <dbReference type="ChEBI" id="CHEBI:16708"/>
        <dbReference type="ChEBI" id="CHEBI:17509"/>
        <dbReference type="ChEBI" id="CHEBI:78440"/>
        <dbReference type="EC" id="3.2.2.9"/>
    </reaction>
</comment>
<comment type="catalytic activity">
    <reaction evidence="1">
        <text>5'-deoxyadenosine + H2O = 5-deoxy-D-ribose + adenine</text>
        <dbReference type="Rhea" id="RHEA:29859"/>
        <dbReference type="ChEBI" id="CHEBI:15377"/>
        <dbReference type="ChEBI" id="CHEBI:16708"/>
        <dbReference type="ChEBI" id="CHEBI:17319"/>
        <dbReference type="ChEBI" id="CHEBI:149540"/>
        <dbReference type="EC" id="3.2.2.9"/>
    </reaction>
    <physiologicalReaction direction="left-to-right" evidence="1">
        <dbReference type="Rhea" id="RHEA:29860"/>
    </physiologicalReaction>
</comment>
<comment type="pathway">
    <text evidence="1">Amino-acid biosynthesis; L-methionine biosynthesis via salvage pathway; S-methyl-5-thio-alpha-D-ribose 1-phosphate from S-methyl-5'-thioadenosine (hydrolase route): step 1/2.</text>
</comment>
<comment type="similarity">
    <text evidence="1">Belongs to the PNP/UDP phosphorylase family. MtnN subfamily.</text>
</comment>
<accession>A8H191</accession>
<dbReference type="EC" id="3.2.2.9" evidence="1"/>
<dbReference type="EMBL" id="CP000851">
    <property type="protein sequence ID" value="ABV86328.1"/>
    <property type="molecule type" value="Genomic_DNA"/>
</dbReference>
<dbReference type="RefSeq" id="WP_012154261.1">
    <property type="nucleotide sequence ID" value="NC_009901.1"/>
</dbReference>
<dbReference type="SMR" id="A8H191"/>
<dbReference type="STRING" id="398579.Spea_1001"/>
<dbReference type="KEGG" id="spl:Spea_1001"/>
<dbReference type="eggNOG" id="COG0775">
    <property type="taxonomic scope" value="Bacteria"/>
</dbReference>
<dbReference type="HOGENOM" id="CLU_031248_2_2_6"/>
<dbReference type="OrthoDB" id="9792278at2"/>
<dbReference type="UniPathway" id="UPA00904">
    <property type="reaction ID" value="UER00871"/>
</dbReference>
<dbReference type="Proteomes" id="UP000002608">
    <property type="component" value="Chromosome"/>
</dbReference>
<dbReference type="GO" id="GO:0005829">
    <property type="term" value="C:cytosol"/>
    <property type="evidence" value="ECO:0007669"/>
    <property type="project" value="TreeGrafter"/>
</dbReference>
<dbReference type="GO" id="GO:0008782">
    <property type="term" value="F:adenosylhomocysteine nucleosidase activity"/>
    <property type="evidence" value="ECO:0007669"/>
    <property type="project" value="UniProtKB-UniRule"/>
</dbReference>
<dbReference type="GO" id="GO:0008930">
    <property type="term" value="F:methylthioadenosine nucleosidase activity"/>
    <property type="evidence" value="ECO:0007669"/>
    <property type="project" value="UniProtKB-UniRule"/>
</dbReference>
<dbReference type="GO" id="GO:0019509">
    <property type="term" value="P:L-methionine salvage from methylthioadenosine"/>
    <property type="evidence" value="ECO:0007669"/>
    <property type="project" value="UniProtKB-UniRule"/>
</dbReference>
<dbReference type="GO" id="GO:0019284">
    <property type="term" value="P:L-methionine salvage from S-adenosylmethionine"/>
    <property type="evidence" value="ECO:0007669"/>
    <property type="project" value="TreeGrafter"/>
</dbReference>
<dbReference type="GO" id="GO:0009164">
    <property type="term" value="P:nucleoside catabolic process"/>
    <property type="evidence" value="ECO:0007669"/>
    <property type="project" value="InterPro"/>
</dbReference>
<dbReference type="CDD" id="cd09008">
    <property type="entry name" value="MTAN"/>
    <property type="match status" value="1"/>
</dbReference>
<dbReference type="FunFam" id="3.40.50.1580:FF:000001">
    <property type="entry name" value="MTA/SAH nucleosidase family protein"/>
    <property type="match status" value="1"/>
</dbReference>
<dbReference type="Gene3D" id="3.40.50.1580">
    <property type="entry name" value="Nucleoside phosphorylase domain"/>
    <property type="match status" value="1"/>
</dbReference>
<dbReference type="HAMAP" id="MF_01684">
    <property type="entry name" value="Salvage_MtnN"/>
    <property type="match status" value="1"/>
</dbReference>
<dbReference type="InterPro" id="IPR010049">
    <property type="entry name" value="MTA_SAH_Nsdase"/>
</dbReference>
<dbReference type="InterPro" id="IPR000845">
    <property type="entry name" value="Nucleoside_phosphorylase_d"/>
</dbReference>
<dbReference type="InterPro" id="IPR035994">
    <property type="entry name" value="Nucleoside_phosphorylase_sf"/>
</dbReference>
<dbReference type="NCBIfam" id="TIGR01704">
    <property type="entry name" value="MTA_SAH-Nsdase"/>
    <property type="match status" value="1"/>
</dbReference>
<dbReference type="NCBIfam" id="NF004079">
    <property type="entry name" value="PRK05584.1"/>
    <property type="match status" value="1"/>
</dbReference>
<dbReference type="PANTHER" id="PTHR46832">
    <property type="entry name" value="5'-METHYLTHIOADENOSINE/S-ADENOSYLHOMOCYSTEINE NUCLEOSIDASE"/>
    <property type="match status" value="1"/>
</dbReference>
<dbReference type="PANTHER" id="PTHR46832:SF1">
    <property type="entry name" value="5'-METHYLTHIOADENOSINE_S-ADENOSYLHOMOCYSTEINE NUCLEOSIDASE"/>
    <property type="match status" value="1"/>
</dbReference>
<dbReference type="Pfam" id="PF01048">
    <property type="entry name" value="PNP_UDP_1"/>
    <property type="match status" value="1"/>
</dbReference>
<dbReference type="SUPFAM" id="SSF53167">
    <property type="entry name" value="Purine and uridine phosphorylases"/>
    <property type="match status" value="1"/>
</dbReference>
<sequence length="230" mass="24173">MKIGIIGAMEPEVAHLVESMEKPSSTTIAGIEFVAGQLAGKEVIVTRSGIGKVTASIATTLLIEKYAPDAIINTGSAGGFADDLAIGDIVISSEVRHHDVDVTAFGYEIGQMAQQPAAFIPDAKLVAAAQKAVASLGEVKAIEGLICTGDSFICDPVRTKTMLENFPTMAACEMEGAAIAQVCHQFDVPFVVIRSLSDNANNDSPVDFDEYIVKAGHHSALMVIALLEQL</sequence>